<reference key="1">
    <citation type="journal article" date="2010" name="Toxicon">
        <title>Two novel antimicrobial peptides from centipede venoms.</title>
        <authorList>
            <person name="Peng K."/>
            <person name="Kong Y."/>
            <person name="Zhai L."/>
            <person name="Wu X."/>
            <person name="Jia P."/>
            <person name="Liu J."/>
            <person name="Yu H."/>
        </authorList>
    </citation>
    <scope>PROTEIN SEQUENCE</scope>
    <scope>FUNCTION</scope>
    <scope>SYNTHESIS</scope>
    <scope>MASS SPECTROMETRY</scope>
    <scope>SUBCELLULAR LOCATION</scope>
    <source>
        <tissue>Venom</tissue>
    </source>
</reference>
<feature type="peptide" id="PRO_0000398339" description="Antimicrobial peptide scolopin-2" evidence="1">
    <location>
        <begin position="1"/>
        <end position="25"/>
    </location>
</feature>
<keyword id="KW-0044">Antibiotic</keyword>
<keyword id="KW-0929">Antimicrobial</keyword>
<keyword id="KW-0204">Cytolysis</keyword>
<keyword id="KW-0903">Direct protein sequencing</keyword>
<keyword id="KW-0295">Fungicide</keyword>
<keyword id="KW-0354">Hemolysis</keyword>
<keyword id="KW-0964">Secreted</keyword>
<sequence>GILKKFMLHRGTKVYKMRTLSKRSH</sequence>
<evidence type="ECO:0000269" key="1">
    <source>
    </source>
</evidence>
<evidence type="ECO:0000303" key="2">
    <source>
    </source>
</evidence>
<evidence type="ECO:0000305" key="3">
    <source>
    </source>
</evidence>
<proteinExistence type="evidence at protein level"/>
<comment type="function">
    <text evidence="1">Antimicrobial peptide against both Gram-positive, -negative and yeast. Also induces histamine release by mast cells and shows moderate hemolytic activities against both human and rabbit red cells.</text>
</comment>
<comment type="subcellular location">
    <subcellularLocation>
        <location evidence="1">Secreted</location>
    </subcellularLocation>
</comment>
<comment type="tissue specificity">
    <text evidence="3">Expressed by the venom gland.</text>
</comment>
<comment type="mass spectrometry"/>
<comment type="miscellaneous">
    <text>Minimum inhibitory concentrations (MIC) are the following: E.coli standard and drug-resistant strains (MIC=5.0 ug/ml), S.aureus standard strain (MIC=0.5 ug/ml), S.aureus drug-resistant strain (MIC=1.0 ug/ml), B.dysenteriae standard strain (MIC=2.5 ug/ml), B.dysenteriae drug-resistant strain (MIC=5.0 ug/ml) and C.albicans (MIC=7.5 ug/ml).</text>
</comment>
<organism>
    <name type="scientific">Scolopendra mutilans</name>
    <name type="common">Chinese red-headed centipede</name>
    <name type="synonym">Scolopendra subspinipes mutilans</name>
    <dbReference type="NCBI Taxonomy" id="2836329"/>
    <lineage>
        <taxon>Eukaryota</taxon>
        <taxon>Metazoa</taxon>
        <taxon>Ecdysozoa</taxon>
        <taxon>Arthropoda</taxon>
        <taxon>Myriapoda</taxon>
        <taxon>Chilopoda</taxon>
        <taxon>Pleurostigmophora</taxon>
        <taxon>Scolopendromorpha</taxon>
        <taxon>Scolopendridae</taxon>
        <taxon>Scolopendra</taxon>
    </lineage>
</organism>
<protein>
    <recommendedName>
        <fullName evidence="2">Antimicrobial peptide scolopin-2</fullName>
    </recommendedName>
</protein>
<accession>P0CH49</accession>
<dbReference type="GO" id="GO:0005576">
    <property type="term" value="C:extracellular region"/>
    <property type="evidence" value="ECO:0007669"/>
    <property type="project" value="UniProtKB-SubCell"/>
</dbReference>
<dbReference type="GO" id="GO:0042742">
    <property type="term" value="P:defense response to bacterium"/>
    <property type="evidence" value="ECO:0007669"/>
    <property type="project" value="UniProtKB-KW"/>
</dbReference>
<dbReference type="GO" id="GO:0050832">
    <property type="term" value="P:defense response to fungus"/>
    <property type="evidence" value="ECO:0007669"/>
    <property type="project" value="UniProtKB-KW"/>
</dbReference>
<dbReference type="GO" id="GO:0031640">
    <property type="term" value="P:killing of cells of another organism"/>
    <property type="evidence" value="ECO:0007669"/>
    <property type="project" value="UniProtKB-KW"/>
</dbReference>
<name>AMP2_SCOMU</name>